<feature type="chain" id="PRO_1000124055" description="4-hydroxy-tetrahydrodipicolinate synthase">
    <location>
        <begin position="1"/>
        <end position="296"/>
    </location>
</feature>
<feature type="active site" description="Proton donor/acceptor" evidence="1">
    <location>
        <position position="137"/>
    </location>
</feature>
<feature type="active site" description="Schiff-base intermediate with substrate" evidence="1">
    <location>
        <position position="166"/>
    </location>
</feature>
<feature type="binding site" evidence="1">
    <location>
        <position position="49"/>
    </location>
    <ligand>
        <name>pyruvate</name>
        <dbReference type="ChEBI" id="CHEBI:15361"/>
    </ligand>
</feature>
<feature type="binding site" evidence="1">
    <location>
        <position position="208"/>
    </location>
    <ligand>
        <name>pyruvate</name>
        <dbReference type="ChEBI" id="CHEBI:15361"/>
    </ligand>
</feature>
<feature type="site" description="Part of a proton relay during catalysis" evidence="1">
    <location>
        <position position="48"/>
    </location>
</feature>
<feature type="site" description="Part of a proton relay during catalysis" evidence="1">
    <location>
        <position position="111"/>
    </location>
</feature>
<dbReference type="EC" id="4.3.3.7" evidence="1"/>
<dbReference type="EMBL" id="CP001110">
    <property type="protein sequence ID" value="ACF42994.1"/>
    <property type="molecule type" value="Genomic_DNA"/>
</dbReference>
<dbReference type="RefSeq" id="WP_012507489.1">
    <property type="nucleotide sequence ID" value="NC_011060.1"/>
</dbReference>
<dbReference type="SMR" id="B4SE03"/>
<dbReference type="STRING" id="324925.Ppha_0699"/>
<dbReference type="KEGG" id="pph:Ppha_0699"/>
<dbReference type="eggNOG" id="COG0329">
    <property type="taxonomic scope" value="Bacteria"/>
</dbReference>
<dbReference type="HOGENOM" id="CLU_049343_7_0_10"/>
<dbReference type="OrthoDB" id="9782828at2"/>
<dbReference type="UniPathway" id="UPA00034">
    <property type="reaction ID" value="UER00017"/>
</dbReference>
<dbReference type="Proteomes" id="UP000002724">
    <property type="component" value="Chromosome"/>
</dbReference>
<dbReference type="GO" id="GO:0005829">
    <property type="term" value="C:cytosol"/>
    <property type="evidence" value="ECO:0007669"/>
    <property type="project" value="TreeGrafter"/>
</dbReference>
<dbReference type="GO" id="GO:0008840">
    <property type="term" value="F:4-hydroxy-tetrahydrodipicolinate synthase activity"/>
    <property type="evidence" value="ECO:0007669"/>
    <property type="project" value="UniProtKB-UniRule"/>
</dbReference>
<dbReference type="GO" id="GO:0019877">
    <property type="term" value="P:diaminopimelate biosynthetic process"/>
    <property type="evidence" value="ECO:0007669"/>
    <property type="project" value="UniProtKB-UniRule"/>
</dbReference>
<dbReference type="GO" id="GO:0009089">
    <property type="term" value="P:lysine biosynthetic process via diaminopimelate"/>
    <property type="evidence" value="ECO:0007669"/>
    <property type="project" value="UniProtKB-UniRule"/>
</dbReference>
<dbReference type="CDD" id="cd00950">
    <property type="entry name" value="DHDPS"/>
    <property type="match status" value="1"/>
</dbReference>
<dbReference type="Gene3D" id="3.20.20.70">
    <property type="entry name" value="Aldolase class I"/>
    <property type="match status" value="1"/>
</dbReference>
<dbReference type="HAMAP" id="MF_00418">
    <property type="entry name" value="DapA"/>
    <property type="match status" value="1"/>
</dbReference>
<dbReference type="InterPro" id="IPR013785">
    <property type="entry name" value="Aldolase_TIM"/>
</dbReference>
<dbReference type="InterPro" id="IPR005263">
    <property type="entry name" value="DapA"/>
</dbReference>
<dbReference type="InterPro" id="IPR002220">
    <property type="entry name" value="DapA-like"/>
</dbReference>
<dbReference type="InterPro" id="IPR020625">
    <property type="entry name" value="Schiff_base-form_aldolases_AS"/>
</dbReference>
<dbReference type="NCBIfam" id="TIGR00674">
    <property type="entry name" value="dapA"/>
    <property type="match status" value="1"/>
</dbReference>
<dbReference type="PANTHER" id="PTHR12128:SF66">
    <property type="entry name" value="4-HYDROXY-2-OXOGLUTARATE ALDOLASE, MITOCHONDRIAL"/>
    <property type="match status" value="1"/>
</dbReference>
<dbReference type="PANTHER" id="PTHR12128">
    <property type="entry name" value="DIHYDRODIPICOLINATE SYNTHASE"/>
    <property type="match status" value="1"/>
</dbReference>
<dbReference type="Pfam" id="PF00701">
    <property type="entry name" value="DHDPS"/>
    <property type="match status" value="1"/>
</dbReference>
<dbReference type="PIRSF" id="PIRSF001365">
    <property type="entry name" value="DHDPS"/>
    <property type="match status" value="1"/>
</dbReference>
<dbReference type="PRINTS" id="PR00146">
    <property type="entry name" value="DHPICSNTHASE"/>
</dbReference>
<dbReference type="SMART" id="SM01130">
    <property type="entry name" value="DHDPS"/>
    <property type="match status" value="1"/>
</dbReference>
<dbReference type="SUPFAM" id="SSF51569">
    <property type="entry name" value="Aldolase"/>
    <property type="match status" value="1"/>
</dbReference>
<dbReference type="PROSITE" id="PS00666">
    <property type="entry name" value="DHDPS_2"/>
    <property type="match status" value="1"/>
</dbReference>
<organism>
    <name type="scientific">Pelodictyon phaeoclathratiforme (strain DSM 5477 / BU-1)</name>
    <dbReference type="NCBI Taxonomy" id="324925"/>
    <lineage>
        <taxon>Bacteria</taxon>
        <taxon>Pseudomonadati</taxon>
        <taxon>Chlorobiota</taxon>
        <taxon>Chlorobiia</taxon>
        <taxon>Chlorobiales</taxon>
        <taxon>Chlorobiaceae</taxon>
        <taxon>Chlorobium/Pelodictyon group</taxon>
        <taxon>Pelodictyon</taxon>
    </lineage>
</organism>
<evidence type="ECO:0000255" key="1">
    <source>
        <dbReference type="HAMAP-Rule" id="MF_00418"/>
    </source>
</evidence>
<evidence type="ECO:0000305" key="2"/>
<comment type="function">
    <text evidence="1">Catalyzes the condensation of (S)-aspartate-beta-semialdehyde [(S)-ASA] and pyruvate to 4-hydroxy-tetrahydrodipicolinate (HTPA).</text>
</comment>
<comment type="catalytic activity">
    <reaction evidence="1">
        <text>L-aspartate 4-semialdehyde + pyruvate = (2S,4S)-4-hydroxy-2,3,4,5-tetrahydrodipicolinate + H2O + H(+)</text>
        <dbReference type="Rhea" id="RHEA:34171"/>
        <dbReference type="ChEBI" id="CHEBI:15361"/>
        <dbReference type="ChEBI" id="CHEBI:15377"/>
        <dbReference type="ChEBI" id="CHEBI:15378"/>
        <dbReference type="ChEBI" id="CHEBI:67139"/>
        <dbReference type="ChEBI" id="CHEBI:537519"/>
        <dbReference type="EC" id="4.3.3.7"/>
    </reaction>
</comment>
<comment type="pathway">
    <text evidence="1">Amino-acid biosynthesis; L-lysine biosynthesis via DAP pathway; (S)-tetrahydrodipicolinate from L-aspartate: step 3/4.</text>
</comment>
<comment type="subunit">
    <text evidence="1">Homotetramer; dimer of dimers.</text>
</comment>
<comment type="subcellular location">
    <subcellularLocation>
        <location evidence="1">Cytoplasm</location>
    </subcellularLocation>
</comment>
<comment type="similarity">
    <text evidence="1">Belongs to the DapA family.</text>
</comment>
<comment type="caution">
    <text evidence="2">Was originally thought to be a dihydrodipicolinate synthase (DHDPS), catalyzing the condensation of (S)-aspartate-beta-semialdehyde [(S)-ASA] and pyruvate to dihydrodipicolinate (DHDP). However, it was shown in E.coli that the product of the enzymatic reaction is not dihydrodipicolinate but in fact (4S)-4-hydroxy-2,3,4,5-tetrahydro-(2S)-dipicolinic acid (HTPA), and that the consecutive dehydration reaction leading to DHDP is not spontaneous but catalyzed by DapB.</text>
</comment>
<proteinExistence type="inferred from homology"/>
<gene>
    <name evidence="1" type="primary">dapA</name>
    <name type="ordered locus">Ppha_0699</name>
</gene>
<keyword id="KW-0028">Amino-acid biosynthesis</keyword>
<keyword id="KW-0963">Cytoplasm</keyword>
<keyword id="KW-0220">Diaminopimelate biosynthesis</keyword>
<keyword id="KW-0456">Lyase</keyword>
<keyword id="KW-0457">Lysine biosynthesis</keyword>
<keyword id="KW-1185">Reference proteome</keyword>
<keyword id="KW-0704">Schiff base</keyword>
<sequence>MSTRYLSGSAVALVTPFKKDMTVDTDALRRLVQFQIAAGTDIIIPCGTTGESPTLSEDEQFDIIRIVKDEVDGKALVAAGAGTNSTPHAVALAKNAVKAGASLLLSVAPYYNKPSQEGIYQHYRHIAEAVTVPIIIYNVPGRTGCNVAASTILRLARDFENIAAVKEATENMSQISELLEERPDHFSVLTGEDSLILPFMAMGGDGVISVAANQIPSQIKQLVEAARLGDLEEARRINRRYRKLLKLNFIESNPVPVKYALSRMGMIEENYRLPLVPLSAENKLLIDQELESLGLI</sequence>
<protein>
    <recommendedName>
        <fullName evidence="1">4-hydroxy-tetrahydrodipicolinate synthase</fullName>
        <shortName evidence="1">HTPA synthase</shortName>
        <ecNumber evidence="1">4.3.3.7</ecNumber>
    </recommendedName>
</protein>
<accession>B4SE03</accession>
<reference key="1">
    <citation type="submission" date="2008-06" db="EMBL/GenBank/DDBJ databases">
        <title>Complete sequence of Pelodictyon phaeoclathratiforme BU-1.</title>
        <authorList>
            <consortium name="US DOE Joint Genome Institute"/>
            <person name="Lucas S."/>
            <person name="Copeland A."/>
            <person name="Lapidus A."/>
            <person name="Glavina del Rio T."/>
            <person name="Dalin E."/>
            <person name="Tice H."/>
            <person name="Bruce D."/>
            <person name="Goodwin L."/>
            <person name="Pitluck S."/>
            <person name="Schmutz J."/>
            <person name="Larimer F."/>
            <person name="Land M."/>
            <person name="Hauser L."/>
            <person name="Kyrpides N."/>
            <person name="Mikhailova N."/>
            <person name="Liu Z."/>
            <person name="Li T."/>
            <person name="Zhao F."/>
            <person name="Overmann J."/>
            <person name="Bryant D.A."/>
            <person name="Richardson P."/>
        </authorList>
    </citation>
    <scope>NUCLEOTIDE SEQUENCE [LARGE SCALE GENOMIC DNA]</scope>
    <source>
        <strain>DSM 5477 / BU-1</strain>
    </source>
</reference>
<name>DAPA_PELPB</name>